<organismHost>
    <name type="scientific">Ornithodoros</name>
    <name type="common">relapsing fever ticks</name>
    <dbReference type="NCBI Taxonomy" id="6937"/>
</organismHost>
<organismHost>
    <name type="scientific">Sus scrofa</name>
    <name type="common">Pig</name>
    <dbReference type="NCBI Taxonomy" id="9823"/>
</organismHost>
<keyword id="KW-1015">Disulfide bond</keyword>
<keyword id="KW-0227">DNA damage</keyword>
<keyword id="KW-0234">DNA repair</keyword>
<keyword id="KW-0244">Early protein</keyword>
<keyword id="KW-0255">Endonuclease</keyword>
<keyword id="KW-0269">Exonuclease</keyword>
<keyword id="KW-1035">Host cytoplasm</keyword>
<keyword id="KW-1048">Host nucleus</keyword>
<keyword id="KW-0378">Hydrolase</keyword>
<keyword id="KW-0426">Late protein</keyword>
<keyword id="KW-0479">Metal-binding</keyword>
<keyword id="KW-0540">Nuclease</keyword>
<keyword id="KW-1185">Reference proteome</keyword>
<keyword id="KW-0946">Virion</keyword>
<keyword id="KW-0862">Zinc</keyword>
<gene>
    <name type="ordered locus">Ba71V-134</name>
    <name type="ORF">E296R</name>
</gene>
<name>APE_ASFB7</name>
<feature type="chain" id="PRO_0000373138" description="Probable AP endonuclease">
    <location>
        <begin position="1"/>
        <end position="296"/>
    </location>
</feature>
<feature type="binding site" evidence="1">
    <location>
        <position position="78"/>
    </location>
    <ligand>
        <name>Zn(2+)</name>
        <dbReference type="ChEBI" id="CHEBI:29105"/>
        <label>1</label>
    </ligand>
</feature>
<feature type="binding site" evidence="1">
    <location>
        <position position="115"/>
    </location>
    <ligand>
        <name>Zn(2+)</name>
        <dbReference type="ChEBI" id="CHEBI:29105"/>
        <label>2</label>
    </ligand>
</feature>
<feature type="binding site" evidence="2">
    <location>
        <position position="142"/>
    </location>
    <ligand>
        <name>Zn(2+)</name>
        <dbReference type="ChEBI" id="CHEBI:29105"/>
        <label>2</label>
    </ligand>
</feature>
<feature type="binding site" evidence="2">
    <location>
        <position position="182"/>
    </location>
    <ligand>
        <name>Zn(2+)</name>
        <dbReference type="ChEBI" id="CHEBI:29105"/>
        <label>3</label>
    </ligand>
</feature>
<feature type="binding site" evidence="2">
    <location>
        <position position="218"/>
    </location>
    <ligand>
        <name>Zn(2+)</name>
        <dbReference type="ChEBI" id="CHEBI:29105"/>
        <label>2</label>
    </ligand>
</feature>
<feature type="binding site" evidence="2">
    <location>
        <position position="231"/>
    </location>
    <ligand>
        <name>Zn(2+)</name>
        <dbReference type="ChEBI" id="CHEBI:29105"/>
        <label>3</label>
    </ligand>
</feature>
<feature type="binding site" evidence="2">
    <location>
        <position position="233"/>
    </location>
    <ligand>
        <name>Zn(2+)</name>
        <dbReference type="ChEBI" id="CHEBI:29105"/>
        <label>3</label>
    </ligand>
</feature>
<feature type="binding site" evidence="1">
    <location>
        <position position="271"/>
    </location>
    <ligand>
        <name>Zn(2+)</name>
        <dbReference type="ChEBI" id="CHEBI:29105"/>
        <label>1</label>
    </ligand>
</feature>
<feature type="disulfide bond" evidence="1">
    <location>
        <begin position="16"/>
        <end position="20"/>
    </location>
</feature>
<comment type="function">
    <text evidence="3 4 9">Endonuclease of the viral base excision repair system that catalyzes DNA cleavage reaction at the apurinic or apyrimidinic sites (AP sites) (PubMed:16503634, PubMed:16641276). Cleaves phosphodiester bonds on the 5' side of AP sites (PubMed:16503634). In addition to endonuclease activity, the AP endonuclease has a proofreading 3'-5' exonuclease activity that is considerably more efficient in the elimination of a mismatch than in that of a correctly paired base (PubMed:16641276). Displays 3'-phosphatase and 3'-repair diesterase activities (PubMed:16503634). The single nucleotide gaps generated by the AP endonuclease are filled by the viral repair DNA polymerase X and the DNA ligase (Probable).</text>
</comment>
<comment type="cofactor">
    <cofactor>
        <name>Zn(2+)</name>
        <dbReference type="ChEBI" id="CHEBI:29105"/>
    </cofactor>
    <text evidence="1">Binds 3 Zn(2+) ions.</text>
</comment>
<comment type="biophysicochemical properties">
    <kinetics>
        <KM evidence="4">53 nM for dsDNA containing uracil</KM>
    </kinetics>
</comment>
<comment type="subcellular location">
    <subcellularLocation>
        <location evidence="4">Host nucleus</location>
    </subcellularLocation>
    <subcellularLocation>
        <location evidence="4">Host cytoplasm</location>
    </subcellularLocation>
    <subcellularLocation>
        <location evidence="5">Virion</location>
    </subcellularLocation>
    <text evidence="4 5">The early enzyme is localized in the nucleus and the cytoplasm, while the late protein is found only in the cytoplasm (PubMed:16641276). Found in association with viral nucleoid (PubMed:30185597).</text>
</comment>
<comment type="induction">
    <text evidence="6">Expressed in the early phase of the viral replicative cycle and accumulates at later times.</text>
</comment>
<comment type="disruption phenotype">
    <text evidence="4">Decreases the growth rate of the virus to 2-4% of the parental virus in swine macrophages.</text>
</comment>
<comment type="miscellaneous">
    <text>Consistent with its intracellular location, ASFV encodes its own replicative DNA polymerase and three base excision repair enzymes: a class II AP endonuclease, the repair polymerase Pol X, and an ATP-dependent DNA ligase.</text>
</comment>
<comment type="similarity">
    <text evidence="2">Belongs to the AP endonuclease 2 family.</text>
</comment>
<reference key="1">
    <citation type="journal article" date="1995" name="Virology">
        <title>Analysis of the complete nucleotide sequence of African swine fever virus.</title>
        <authorList>
            <person name="Yanez R.J."/>
            <person name="Rodriguez J.M."/>
            <person name="Nogal M.L."/>
            <person name="Yuste L."/>
            <person name="Enriquez C."/>
            <person name="Rodriguez J.F."/>
            <person name="Vinuela E."/>
        </authorList>
    </citation>
    <scope>NUCLEOTIDE SEQUENCE [LARGE SCALE GENOMIC DNA]</scope>
</reference>
<reference key="2">
    <citation type="journal article" date="2006" name="J. Virol.">
        <title>African swine fever virus protein pE296R is a DNA repair apurinic/apyrimidinic endonuclease required for virus growth in swine macrophages.</title>
        <authorList>
            <person name="Redrejo-Rodriguez M."/>
            <person name="Garcia-Escudero R."/>
            <person name="Yanez-Munoz R.J."/>
            <person name="Salas M.L."/>
            <person name="Salas J."/>
        </authorList>
    </citation>
    <scope>SUBCELLULAR LOCATION</scope>
    <scope>FUNCTION</scope>
    <scope>CATALYTIC ACTIVITY</scope>
    <scope>BIOPHYSICOCHEMICAL PROPERTIES</scope>
    <scope>DISRUPTION PHENOTYPE</scope>
</reference>
<reference key="3">
    <citation type="journal article" date="2006" name="Biochemistry">
        <title>Contributions of an endonuclease IV homologue to DNA repair in the African swine fever virus.</title>
        <authorList>
            <person name="Lamarche B.J."/>
            <person name="Tsai M.-D."/>
        </authorList>
    </citation>
    <scope>FUNCTION</scope>
    <scope>CATALYTIC ACTIVITY</scope>
</reference>
<reference key="4">
    <citation type="journal article" date="2018" name="J. Virol.">
        <title>A Proteomic Atlas of the African Swine Fever Virus Particle.</title>
        <authorList>
            <person name="Alejo A."/>
            <person name="Matamoros T."/>
            <person name="Guerra M."/>
            <person name="Andres G."/>
        </authorList>
    </citation>
    <scope>SUBCELLULAR LOCATION</scope>
</reference>
<reference key="5">
    <citation type="journal article" date="2020" name="J. Virol.">
        <title>The African Swine Fever Virus Transcriptome.</title>
        <authorList>
            <person name="Cackett G."/>
            <person name="Matelska D."/>
            <person name="Sykora M."/>
            <person name="Portugal R."/>
            <person name="Malecki M."/>
            <person name="Baehler J."/>
            <person name="Dixon L."/>
            <person name="Werner F."/>
        </authorList>
    </citation>
    <scope>INDUCTION</scope>
</reference>
<organism>
    <name type="scientific">African swine fever virus (strain Badajoz 1971 Vero-adapted)</name>
    <name type="common">Ba71V</name>
    <name type="synonym">ASFV</name>
    <dbReference type="NCBI Taxonomy" id="10498"/>
    <lineage>
        <taxon>Viruses</taxon>
        <taxon>Varidnaviria</taxon>
        <taxon>Bamfordvirae</taxon>
        <taxon>Nucleocytoviricota</taxon>
        <taxon>Pokkesviricetes</taxon>
        <taxon>Asfuvirales</taxon>
        <taxon>Asfarviridae</taxon>
        <taxon>Asfivirus</taxon>
        <taxon>African swine fever virus</taxon>
    </lineage>
</organism>
<dbReference type="EC" id="3.1.21.-" evidence="3 4"/>
<dbReference type="EMBL" id="U18466">
    <property type="protein sequence ID" value="AAA65362.1"/>
    <property type="molecule type" value="Genomic_DNA"/>
</dbReference>
<dbReference type="RefSeq" id="NP_042826.1">
    <property type="nucleotide sequence ID" value="NC_001659.2"/>
</dbReference>
<dbReference type="SMR" id="Q65202"/>
<dbReference type="GeneID" id="22220362"/>
<dbReference type="KEGG" id="vg:22220362"/>
<dbReference type="Proteomes" id="UP000000624">
    <property type="component" value="Segment"/>
</dbReference>
<dbReference type="GO" id="GO:0030430">
    <property type="term" value="C:host cell cytoplasm"/>
    <property type="evidence" value="ECO:0000314"/>
    <property type="project" value="UniProtKB"/>
</dbReference>
<dbReference type="GO" id="GO:0042025">
    <property type="term" value="C:host cell nucleus"/>
    <property type="evidence" value="ECO:0000314"/>
    <property type="project" value="UniProtKB"/>
</dbReference>
<dbReference type="GO" id="GO:0044423">
    <property type="term" value="C:virion component"/>
    <property type="evidence" value="ECO:0007669"/>
    <property type="project" value="UniProtKB-KW"/>
</dbReference>
<dbReference type="GO" id="GO:0008408">
    <property type="term" value="F:3'-5' exonuclease activity"/>
    <property type="evidence" value="ECO:0000314"/>
    <property type="project" value="UniProtKB"/>
</dbReference>
<dbReference type="GO" id="GO:0003677">
    <property type="term" value="F:DNA binding"/>
    <property type="evidence" value="ECO:0007669"/>
    <property type="project" value="InterPro"/>
</dbReference>
<dbReference type="GO" id="GO:0003906">
    <property type="term" value="F:DNA-(apurinic or apyrimidinic site) endonuclease activity"/>
    <property type="evidence" value="ECO:0007669"/>
    <property type="project" value="TreeGrafter"/>
</dbReference>
<dbReference type="GO" id="GO:0004519">
    <property type="term" value="F:endonuclease activity"/>
    <property type="evidence" value="ECO:0000314"/>
    <property type="project" value="UniProtKB"/>
</dbReference>
<dbReference type="GO" id="GO:0008081">
    <property type="term" value="F:phosphoric diester hydrolase activity"/>
    <property type="evidence" value="ECO:0007669"/>
    <property type="project" value="TreeGrafter"/>
</dbReference>
<dbReference type="GO" id="GO:0008270">
    <property type="term" value="F:zinc ion binding"/>
    <property type="evidence" value="ECO:0007669"/>
    <property type="project" value="InterPro"/>
</dbReference>
<dbReference type="GO" id="GO:0006284">
    <property type="term" value="P:base-excision repair"/>
    <property type="evidence" value="ECO:0007669"/>
    <property type="project" value="TreeGrafter"/>
</dbReference>
<dbReference type="GO" id="GO:0046787">
    <property type="term" value="P:viral DNA repair"/>
    <property type="evidence" value="ECO:0000314"/>
    <property type="project" value="UniProtKB"/>
</dbReference>
<dbReference type="CDD" id="cd00019">
    <property type="entry name" value="AP2Ec"/>
    <property type="match status" value="1"/>
</dbReference>
<dbReference type="FunFam" id="3.20.20.150:FF:000028">
    <property type="entry name" value="Probable AP endonuclease"/>
    <property type="match status" value="1"/>
</dbReference>
<dbReference type="Gene3D" id="3.20.20.150">
    <property type="entry name" value="Divalent-metal-dependent TIM barrel enzymes"/>
    <property type="match status" value="1"/>
</dbReference>
<dbReference type="InterPro" id="IPR001719">
    <property type="entry name" value="AP_endonuc_2"/>
</dbReference>
<dbReference type="InterPro" id="IPR018246">
    <property type="entry name" value="AP_endonuc_F2_Zn_BS"/>
</dbReference>
<dbReference type="InterPro" id="IPR036237">
    <property type="entry name" value="Xyl_isomerase-like_sf"/>
</dbReference>
<dbReference type="InterPro" id="IPR013022">
    <property type="entry name" value="Xyl_isomerase-like_TIM-brl"/>
</dbReference>
<dbReference type="PANTHER" id="PTHR21445:SF0">
    <property type="entry name" value="APURINIC-APYRIMIDINIC ENDONUCLEASE"/>
    <property type="match status" value="1"/>
</dbReference>
<dbReference type="PANTHER" id="PTHR21445">
    <property type="entry name" value="ENDONUCLEASE IV ENDODEOXYRIBONUCLEASE IV"/>
    <property type="match status" value="1"/>
</dbReference>
<dbReference type="Pfam" id="PF01261">
    <property type="entry name" value="AP_endonuc_2"/>
    <property type="match status" value="1"/>
</dbReference>
<dbReference type="SMART" id="SM00518">
    <property type="entry name" value="AP2Ec"/>
    <property type="match status" value="1"/>
</dbReference>
<dbReference type="SUPFAM" id="SSF51658">
    <property type="entry name" value="Xylose isomerase-like"/>
    <property type="match status" value="1"/>
</dbReference>
<dbReference type="PROSITE" id="PS00731">
    <property type="entry name" value="AP_NUCLEASE_F2_3"/>
    <property type="match status" value="1"/>
</dbReference>
<dbReference type="PROSITE" id="PS51432">
    <property type="entry name" value="AP_NUCLEASE_F2_4"/>
    <property type="match status" value="1"/>
</dbReference>
<accession>Q65202</accession>
<sequence>MFGAFVSHRLWSDSGCTTTCITNSIANYVAFGEQIGFPFKSAQVFIAGPRKAVINIQEDDKVELLKMIVKHNLWVVAHGTYLDVPWSRRSAFVTHFIQQELLICKEVGIKGLVLHLGAVEPELIVEGLKKIKPVEGVVIYLETPHNKHHTYKYSTMEQIKELFLRIRNTRLKQIGLCIDTAHIWSSGVNISSYNDAGQWLRSLENIHSVIPPSHIMFHLNDAATECGSGIDRHASLFEGMIWKSYSHKIKKSGLYCFVEYITRHQCPAILERNLGSSMQLQTALTAEFTTLKSLLK</sequence>
<proteinExistence type="evidence at protein level"/>
<protein>
    <recommendedName>
        <fullName evidence="7">Probable AP endonuclease</fullName>
        <shortName>APE</shortName>
        <ecNumber evidence="3 4">3.1.21.-</ecNumber>
    </recommendedName>
    <alternativeName>
        <fullName evidence="8">pE296R</fullName>
    </alternativeName>
</protein>
<evidence type="ECO:0000250" key="1">
    <source>
        <dbReference type="UniProtKB" id="P0C9C6"/>
    </source>
</evidence>
<evidence type="ECO:0000255" key="2">
    <source>
        <dbReference type="PROSITE-ProRule" id="PRU00763"/>
    </source>
</evidence>
<evidence type="ECO:0000269" key="3">
    <source>
    </source>
</evidence>
<evidence type="ECO:0000269" key="4">
    <source>
    </source>
</evidence>
<evidence type="ECO:0000269" key="5">
    <source>
    </source>
</evidence>
<evidence type="ECO:0000269" key="6">
    <source>
    </source>
</evidence>
<evidence type="ECO:0000303" key="7">
    <source>
    </source>
</evidence>
<evidence type="ECO:0000303" key="8">
    <source>
    </source>
</evidence>
<evidence type="ECO:0000305" key="9"/>